<accession>B0Z4L4</accession>
<organism>
    <name type="scientific">Oenothera argillicola</name>
    <name type="common">Appalachian evening primrose</name>
    <dbReference type="NCBI Taxonomy" id="3940"/>
    <lineage>
        <taxon>Eukaryota</taxon>
        <taxon>Viridiplantae</taxon>
        <taxon>Streptophyta</taxon>
        <taxon>Embryophyta</taxon>
        <taxon>Tracheophyta</taxon>
        <taxon>Spermatophyta</taxon>
        <taxon>Magnoliopsida</taxon>
        <taxon>eudicotyledons</taxon>
        <taxon>Gunneridae</taxon>
        <taxon>Pentapetalae</taxon>
        <taxon>rosids</taxon>
        <taxon>malvids</taxon>
        <taxon>Myrtales</taxon>
        <taxon>Onagraceae</taxon>
        <taxon>Onagroideae</taxon>
        <taxon>Onagreae</taxon>
        <taxon>Oenothera</taxon>
    </lineage>
</organism>
<reference key="1">
    <citation type="journal article" date="2008" name="Nucleic Acids Res.">
        <title>The complete nucleotide sequences of the five genetically distinct plastid genomes of Oenothera, subsection Oenothera: I. Sequence evaluation and plastome evolution.</title>
        <authorList>
            <person name="Greiner S."/>
            <person name="Wang X."/>
            <person name="Rauwolf U."/>
            <person name="Silber M.V."/>
            <person name="Mayer K."/>
            <person name="Meurer J."/>
            <person name="Haberer G."/>
            <person name="Herrmann R.G."/>
        </authorList>
    </citation>
    <scope>NUCLEOTIDE SEQUENCE [LARGE SCALE GENOMIC DNA]</scope>
    <source>
        <strain>cv. Douthat 1</strain>
    </source>
</reference>
<dbReference type="EC" id="7.1.1.-" evidence="1"/>
<dbReference type="EMBL" id="EU262887">
    <property type="protein sequence ID" value="ABW98692.1"/>
    <property type="molecule type" value="Genomic_DNA"/>
</dbReference>
<dbReference type="RefSeq" id="YP_001687125.1">
    <property type="nucleotide sequence ID" value="NC_010358.2"/>
</dbReference>
<dbReference type="SMR" id="B0Z4L4"/>
<dbReference type="GeneID" id="5951891"/>
<dbReference type="GO" id="GO:0009535">
    <property type="term" value="C:chloroplast thylakoid membrane"/>
    <property type="evidence" value="ECO:0007669"/>
    <property type="project" value="UniProtKB-SubCell"/>
</dbReference>
<dbReference type="GO" id="GO:0008137">
    <property type="term" value="F:NADH dehydrogenase (ubiquinone) activity"/>
    <property type="evidence" value="ECO:0007669"/>
    <property type="project" value="InterPro"/>
</dbReference>
<dbReference type="GO" id="GO:0048038">
    <property type="term" value="F:quinone binding"/>
    <property type="evidence" value="ECO:0007669"/>
    <property type="project" value="UniProtKB-KW"/>
</dbReference>
<dbReference type="GO" id="GO:0019684">
    <property type="term" value="P:photosynthesis, light reaction"/>
    <property type="evidence" value="ECO:0007669"/>
    <property type="project" value="UniProtKB-UniRule"/>
</dbReference>
<dbReference type="FunFam" id="3.30.460.80:FF:000004">
    <property type="entry name" value="NAD(P)H-quinone oxidoreductase subunit J, chloroplastic"/>
    <property type="match status" value="1"/>
</dbReference>
<dbReference type="Gene3D" id="3.30.460.80">
    <property type="entry name" value="NADH:ubiquinone oxidoreductase, 30kDa subunit"/>
    <property type="match status" value="1"/>
</dbReference>
<dbReference type="HAMAP" id="MF_01357">
    <property type="entry name" value="NDH1_NuoC"/>
    <property type="match status" value="1"/>
</dbReference>
<dbReference type="InterPro" id="IPR010218">
    <property type="entry name" value="NADH_DH_suC"/>
</dbReference>
<dbReference type="InterPro" id="IPR037232">
    <property type="entry name" value="NADH_quin_OxRdtase_su_C/D-like"/>
</dbReference>
<dbReference type="InterPro" id="IPR001268">
    <property type="entry name" value="NADH_UbQ_OxRdtase_30kDa_su"/>
</dbReference>
<dbReference type="InterPro" id="IPR020396">
    <property type="entry name" value="NADH_UbQ_OxRdtase_CS"/>
</dbReference>
<dbReference type="NCBIfam" id="NF009141">
    <property type="entry name" value="PRK12494.1"/>
    <property type="match status" value="1"/>
</dbReference>
<dbReference type="PANTHER" id="PTHR10884:SF14">
    <property type="entry name" value="NADH DEHYDROGENASE [UBIQUINONE] IRON-SULFUR PROTEIN 3, MITOCHONDRIAL"/>
    <property type="match status" value="1"/>
</dbReference>
<dbReference type="PANTHER" id="PTHR10884">
    <property type="entry name" value="NADH DEHYDROGENASE UBIQUINONE IRON-SULFUR PROTEIN 3"/>
    <property type="match status" value="1"/>
</dbReference>
<dbReference type="Pfam" id="PF00329">
    <property type="entry name" value="Complex1_30kDa"/>
    <property type="match status" value="1"/>
</dbReference>
<dbReference type="SUPFAM" id="SSF143243">
    <property type="entry name" value="Nqo5-like"/>
    <property type="match status" value="1"/>
</dbReference>
<dbReference type="PROSITE" id="PS00542">
    <property type="entry name" value="COMPLEX1_30K"/>
    <property type="match status" value="1"/>
</dbReference>
<geneLocation type="chloroplast"/>
<comment type="function">
    <text evidence="1">NDH shuttles electrons from NAD(P)H:plastoquinone, via FMN and iron-sulfur (Fe-S) centers, to quinones in the photosynthetic chain and possibly in a chloroplast respiratory chain. The immediate electron acceptor for the enzyme in this species is believed to be plastoquinone. Couples the redox reaction to proton translocation, and thus conserves the redox energy in a proton gradient.</text>
</comment>
<comment type="catalytic activity">
    <reaction evidence="1">
        <text>a plastoquinone + NADH + (n+1) H(+)(in) = a plastoquinol + NAD(+) + n H(+)(out)</text>
        <dbReference type="Rhea" id="RHEA:42608"/>
        <dbReference type="Rhea" id="RHEA-COMP:9561"/>
        <dbReference type="Rhea" id="RHEA-COMP:9562"/>
        <dbReference type="ChEBI" id="CHEBI:15378"/>
        <dbReference type="ChEBI" id="CHEBI:17757"/>
        <dbReference type="ChEBI" id="CHEBI:57540"/>
        <dbReference type="ChEBI" id="CHEBI:57945"/>
        <dbReference type="ChEBI" id="CHEBI:62192"/>
    </reaction>
</comment>
<comment type="catalytic activity">
    <reaction evidence="1">
        <text>a plastoquinone + NADPH + (n+1) H(+)(in) = a plastoquinol + NADP(+) + n H(+)(out)</text>
        <dbReference type="Rhea" id="RHEA:42612"/>
        <dbReference type="Rhea" id="RHEA-COMP:9561"/>
        <dbReference type="Rhea" id="RHEA-COMP:9562"/>
        <dbReference type="ChEBI" id="CHEBI:15378"/>
        <dbReference type="ChEBI" id="CHEBI:17757"/>
        <dbReference type="ChEBI" id="CHEBI:57783"/>
        <dbReference type="ChEBI" id="CHEBI:58349"/>
        <dbReference type="ChEBI" id="CHEBI:62192"/>
    </reaction>
</comment>
<comment type="subunit">
    <text evidence="1">NDH is composed of at least 16 different subunits, 5 of which are encoded in the nucleus.</text>
</comment>
<comment type="subcellular location">
    <subcellularLocation>
        <location evidence="1">Plastid</location>
        <location evidence="1">Chloroplast thylakoid membrane</location>
        <topology evidence="1">Peripheral membrane protein</topology>
        <orientation evidence="1">Stromal side</orientation>
    </subcellularLocation>
</comment>
<comment type="similarity">
    <text evidence="1">Belongs to the complex I 30 kDa subunit family.</text>
</comment>
<protein>
    <recommendedName>
        <fullName evidence="1">NAD(P)H-quinone oxidoreductase subunit J, chloroplastic</fullName>
        <ecNumber evidence="1">7.1.1.-</ecNumber>
    </recommendedName>
    <alternativeName>
        <fullName>NAD(P)H dehydrogenase subunit J</fullName>
    </alternativeName>
    <alternativeName>
        <fullName evidence="1">NADH-plastoquinone oxidoreductase subunit J</fullName>
    </alternativeName>
</protein>
<sequence length="158" mass="18592">MQGRLSAWLVKHGLVHRSLGFDYQGIETLQIKPEEWHSIAVILYVYGYNYLRSQCAYDVAPGGLLASVYHLTRIEYGVDQAEEVCIKVFAPRNNPRIPSVFWVWKSADFQERESYDMLGIRYDNHPRLKRILMPESWIGWPLRKDYIAPNFYEIQDAH</sequence>
<evidence type="ECO:0000255" key="1">
    <source>
        <dbReference type="HAMAP-Rule" id="MF_01357"/>
    </source>
</evidence>
<name>NDHJ_OENAR</name>
<proteinExistence type="inferred from homology"/>
<keyword id="KW-0150">Chloroplast</keyword>
<keyword id="KW-0472">Membrane</keyword>
<keyword id="KW-0520">NAD</keyword>
<keyword id="KW-0521">NADP</keyword>
<keyword id="KW-0934">Plastid</keyword>
<keyword id="KW-0618">Plastoquinone</keyword>
<keyword id="KW-0874">Quinone</keyword>
<keyword id="KW-0793">Thylakoid</keyword>
<keyword id="KW-1278">Translocase</keyword>
<keyword id="KW-0813">Transport</keyword>
<gene>
    <name evidence="1" type="primary">ndhJ</name>
</gene>
<feature type="chain" id="PRO_0000358289" description="NAD(P)H-quinone oxidoreductase subunit J, chloroplastic">
    <location>
        <begin position="1"/>
        <end position="158"/>
    </location>
</feature>